<feature type="chain" id="PRO_0000087436" description="Argonaute protein wago-1" evidence="9">
    <location>
        <begin position="1"/>
        <end position="945"/>
    </location>
</feature>
<feature type="domain" description="PAZ" evidence="1">
    <location>
        <begin position="322"/>
        <end position="432"/>
    </location>
</feature>
<feature type="domain" description="Piwi" evidence="2">
    <location>
        <begin position="636"/>
        <end position="899"/>
    </location>
</feature>
<feature type="region of interest" description="Disordered" evidence="3">
    <location>
        <begin position="1"/>
        <end position="41"/>
    </location>
</feature>
<feature type="compositionally biased region" description="Pro residues" evidence="3">
    <location>
        <begin position="1"/>
        <end position="20"/>
    </location>
</feature>
<protein>
    <recommendedName>
        <fullName evidence="9">Argonaute protein wago-1</fullName>
    </recommendedName>
    <alternativeName>
        <fullName evidence="11">Worm-specific argonaute protein 1</fullName>
    </alternativeName>
</protein>
<proteinExistence type="evidence at protein level"/>
<sequence>MSPHPPQPHPPMPPMPPVTAPPGAMTPMPPVPADAQKLHQSTGNDACIKRLQQLNVEDGAKMYMKPTEPGKMGRPVDIQTNVFGIEVTKETTVHRFMVHAKADLTSTKEVTFTKKGKEDFVVQDRRDKCCNIFFLAVEKNPEFFKMKDGNQIVYDGQSTLYTTVNLFSELDANGTKSKVFQINGADTGNDDLKTLPCISLEIYAPRDNSITLSSENLGKRTADQNIEVNNREYTQFLELALNQHCVRETNRFGCFEHGKVYFLNATEEGFDQRDCVDVGDGKQLYPGLKKTIQFIEGPYGRGQNNPSLVIDGMKAAFHKEQTVIQKLFDITGQDPSNGLNNMTREKAAAVIKGLDCYSTYTNRKRHLRIEGIFHESATKTRFELPDGKTCSIAEYYADKYKISLQYPNANLVVCKDRGNNNYFPAELMTVSRNQRVTIPQQTGNQSQKTTKECAVLPDVRQRMIITGKNAVNITLENELLVALGIKVYSEPLMVQARELDGKELVYQRSVMSDMGKWRAPPGWFVKPATVPDLWAAYAVGNPGCRFSIGDVNQLVGMFIDSCKKKGMVIKPPCETGLYSTEKIMTQLEKVAASKCKYVLMITDDAIVHLHKQYKALEQRTMMIVQDMKISKANAVVKDGKRLTLENIINKTNVKLGGLNYTVSDAKKSMTDEQLIIGVGVSAPPAGTKYMMDNKGHLNPQIIGFASNAVANHEFVGDFVLAPSGQDTMASIEDVLQNSIDLFEKNRKALPKRIIIYRSGASEGSHASILAYEIPLARAIIHGYSKEIKLIFIVVTKEHSYRFFRDQLRSGGKATEMNIPPGIVLDNAVTNPACKQFFLNGHTTLQGTAKTPLYTVLADDCKAPMDRLEELTFTLCHHHQIVSLSTSIPTPLYVANEYAKRGRDLWGELTTKGPIEAKESQGERLKELTKEIGYKQTDLNQKRVNA</sequence>
<reference key="1">
    <citation type="journal article" date="1998" name="Science">
        <title>Genome sequence of the nematode C. elegans: a platform for investigating biology.</title>
        <authorList>
            <consortium name="The C. elegans sequencing consortium"/>
        </authorList>
    </citation>
    <scope>NUCLEOTIDE SEQUENCE [LARGE SCALE GENOMIC DNA]</scope>
    <source>
        <strain>Bristol N2</strain>
    </source>
</reference>
<reference evidence="9" key="2">
    <citation type="journal article" date="2000" name="Mol. Cell">
        <title>A global profile of germline gene expression in C. elegans.</title>
        <authorList>
            <person name="Reinke V."/>
            <person name="Smith H.E."/>
            <person name="Nance J."/>
            <person name="Wang J."/>
            <person name="Van Doren C."/>
            <person name="Begley R."/>
            <person name="Jones S.J.M."/>
            <person name="Davis E.B."/>
            <person name="Scherer S."/>
            <person name="Ward S."/>
            <person name="Kim S.K."/>
        </authorList>
    </citation>
    <scope>TISSUE SPECIFICITY</scope>
</reference>
<reference key="3">
    <citation type="journal article" date="2006" name="Cell">
        <title>Analysis of the C. elegans Argonaute family reveals that distinct Argonautes act sequentially during RNAi.</title>
        <authorList>
            <person name="Yigit E."/>
            <person name="Batista P.J."/>
            <person name="Bei Y."/>
            <person name="Pang K.M."/>
            <person name="Chen C.C."/>
            <person name="Tolia N.H."/>
            <person name="Joshua-Tor L."/>
            <person name="Mitani S."/>
            <person name="Simard M.J."/>
            <person name="Mello C.C."/>
        </authorList>
    </citation>
    <scope>GENE FAMILY</scope>
</reference>
<reference key="4">
    <citation type="journal article" date="2009" name="Mol. Cell">
        <title>Distinct argonaute-mediated 22G-RNA pathways direct genome surveillance in the C. elegans germline.</title>
        <authorList>
            <person name="Gu W."/>
            <person name="Shirayama M."/>
            <person name="Conte D. Jr."/>
            <person name="Vasale J."/>
            <person name="Batista P.J."/>
            <person name="Claycomb J.M."/>
            <person name="Moresco J.J."/>
            <person name="Youngman E.M."/>
            <person name="Keys J."/>
            <person name="Stoltz M.J."/>
            <person name="Chen C.C."/>
            <person name="Chaves D.A."/>
            <person name="Duan S."/>
            <person name="Kasschau K.D."/>
            <person name="Fahlgren N."/>
            <person name="Yates J.R."/>
            <person name="Mitani S."/>
            <person name="Carrington J.C."/>
            <person name="Mello C.C."/>
        </authorList>
    </citation>
    <scope>FUNCTION</scope>
    <scope>SUBCELLULAR LOCATION</scope>
</reference>
<reference key="5">
    <citation type="journal article" date="2014" name="Curr. Biol.">
        <title>The vasa homolog rde-12 engages target mRNA and multiple argonaute proteins to promote RNAi in C. elegans.</title>
        <authorList>
            <person name="Shirayama M."/>
            <person name="Stanney W."/>
            <person name="Gu W."/>
            <person name="Seth M."/>
            <person name="Mello C.C."/>
        </authorList>
    </citation>
    <scope>INTERACTION WITH RDE-12</scope>
    <scope>SUBCELLULAR LOCATION</scope>
</reference>
<reference key="6">
    <citation type="journal article" date="2018" name="Mol. Cell">
        <title>ZNFX-1 Functions within Perinuclear Nuage to Balance Epigenetic Signals.</title>
        <authorList>
            <person name="Ishidate T."/>
            <person name="Ozturk A.R."/>
            <person name="Durning D.J."/>
            <person name="Sharma R."/>
            <person name="Shen E.Z."/>
            <person name="Chen H."/>
            <person name="Seth M."/>
            <person name="Shirayama M."/>
            <person name="Mello C.C."/>
        </authorList>
    </citation>
    <scope>INTERACTION WITH ZNFX-1</scope>
</reference>
<gene>
    <name evidence="11" type="primary">wago-1</name>
    <name evidence="11" type="ORF">R06C7.1</name>
</gene>
<accession>Q21770</accession>
<evidence type="ECO:0000255" key="1">
    <source>
        <dbReference type="PROSITE-ProRule" id="PRU00142"/>
    </source>
</evidence>
<evidence type="ECO:0000255" key="2">
    <source>
        <dbReference type="PROSITE-ProRule" id="PRU00150"/>
    </source>
</evidence>
<evidence type="ECO:0000256" key="3">
    <source>
        <dbReference type="SAM" id="MobiDB-lite"/>
    </source>
</evidence>
<evidence type="ECO:0000269" key="4">
    <source>
    </source>
</evidence>
<evidence type="ECO:0000269" key="5">
    <source>
    </source>
</evidence>
<evidence type="ECO:0000269" key="6">
    <source>
    </source>
</evidence>
<evidence type="ECO:0000269" key="7">
    <source>
    </source>
</evidence>
<evidence type="ECO:0000303" key="8">
    <source>
    </source>
</evidence>
<evidence type="ECO:0000305" key="9"/>
<evidence type="ECO:0000312" key="10">
    <source>
        <dbReference type="EMBL" id="CAA95839.1"/>
    </source>
</evidence>
<evidence type="ECO:0000312" key="11">
    <source>
        <dbReference type="WormBase" id="R06C7.1"/>
    </source>
</evidence>
<name>WAGO1_CAEEL</name>
<comment type="function">
    <text evidence="5">Argonaute protein which is involved in the endogenous small interfering RNA (endo-siRNA) pathway. Interacts with secondary 22G-RNAs, which are RNA-dependent RNA polymerase-derived endo-siRNAs, typically 22 nucleotides in length with a 5'guanosine residue. In the germline, functions in a genome surveillance system to silence transposons and aberrant transcripts.</text>
</comment>
<comment type="subunit">
    <text evidence="6 7">Interacts with rde-12 (PubMed:24684931). Interacts with znfx-1 (PubMed:29775580).</text>
</comment>
<comment type="subcellular location">
    <subcellularLocation>
        <location evidence="5 6">Cytoplasmic granule</location>
    </subcellularLocation>
</comment>
<comment type="tissue specificity">
    <text evidence="4">Enriched in sperm and oocytes.</text>
</comment>
<comment type="miscellaneous">
    <text evidence="8">Members of the WAGO (worm-specific argonaute) subfamily lack conserved metal-binding residues found in other argonaute proteins and probably do not cleave target mRNAs directly.</text>
</comment>
<comment type="similarity">
    <text evidence="9">Belongs to the Argonaute family. WAGO subfamily.</text>
</comment>
<keyword id="KW-0217">Developmental protein</keyword>
<keyword id="KW-1185">Reference proteome</keyword>
<keyword id="KW-0943">RNA-mediated gene silencing</keyword>
<dbReference type="EMBL" id="BX284601">
    <property type="protein sequence ID" value="CAA95839.1"/>
    <property type="molecule type" value="Genomic_DNA"/>
</dbReference>
<dbReference type="PIR" id="T23965">
    <property type="entry name" value="T23965"/>
</dbReference>
<dbReference type="RefSeq" id="NP_492045.1">
    <property type="nucleotide sequence ID" value="NM_059644.8"/>
</dbReference>
<dbReference type="SMR" id="Q21770"/>
<dbReference type="BioGRID" id="37906">
    <property type="interactions" value="29"/>
</dbReference>
<dbReference type="FunCoup" id="Q21770">
    <property type="interactions" value="20"/>
</dbReference>
<dbReference type="STRING" id="6239.R06C7.1.1"/>
<dbReference type="PaxDb" id="6239-R06C7.1"/>
<dbReference type="PeptideAtlas" id="Q21770"/>
<dbReference type="EnsemblMetazoa" id="R06C7.1.1">
    <property type="protein sequence ID" value="R06C7.1.1"/>
    <property type="gene ID" value="WBGene00011061"/>
</dbReference>
<dbReference type="GeneID" id="172463"/>
<dbReference type="KEGG" id="cel:CELE_R06C7.1"/>
<dbReference type="UCSC" id="R06C7.1">
    <property type="organism name" value="c. elegans"/>
</dbReference>
<dbReference type="AGR" id="WB:WBGene00011061"/>
<dbReference type="CTD" id="172463"/>
<dbReference type="WormBase" id="R06C7.1">
    <property type="protein sequence ID" value="CE06244"/>
    <property type="gene ID" value="WBGene00011061"/>
    <property type="gene designation" value="wago-1"/>
</dbReference>
<dbReference type="eggNOG" id="KOG1041">
    <property type="taxonomic scope" value="Eukaryota"/>
</dbReference>
<dbReference type="GeneTree" id="ENSGT00940000173649"/>
<dbReference type="HOGENOM" id="CLU_310185_0_0_1"/>
<dbReference type="InParanoid" id="Q21770"/>
<dbReference type="OMA" id="KCCNIFF"/>
<dbReference type="OrthoDB" id="9981668at2759"/>
<dbReference type="PhylomeDB" id="Q21770"/>
<dbReference type="Reactome" id="R-CEL-203927">
    <property type="pathway name" value="MicroRNA (miRNA) biogenesis"/>
</dbReference>
<dbReference type="Reactome" id="R-CEL-426486">
    <property type="pathway name" value="Small interfering RNA (siRNA) biogenesis"/>
</dbReference>
<dbReference type="Reactome" id="R-CEL-5578749">
    <property type="pathway name" value="Transcriptional regulation by small RNAs"/>
</dbReference>
<dbReference type="CD-CODE" id="73A75392">
    <property type="entry name" value="P-granule"/>
</dbReference>
<dbReference type="PRO" id="PR:Q21770"/>
<dbReference type="Proteomes" id="UP000001940">
    <property type="component" value="Chromosome I"/>
</dbReference>
<dbReference type="Bgee" id="WBGene00011061">
    <property type="expression patterns" value="Expressed in germ line (C elegans) and 4 other cell types or tissues"/>
</dbReference>
<dbReference type="GO" id="GO:0005737">
    <property type="term" value="C:cytoplasm"/>
    <property type="evidence" value="ECO:0000318"/>
    <property type="project" value="GO_Central"/>
</dbReference>
<dbReference type="GO" id="GO:0036464">
    <property type="term" value="C:cytoplasmic ribonucleoprotein granule"/>
    <property type="evidence" value="ECO:0000318"/>
    <property type="project" value="GO_Central"/>
</dbReference>
<dbReference type="GO" id="GO:0005634">
    <property type="term" value="C:nucleus"/>
    <property type="evidence" value="ECO:0000318"/>
    <property type="project" value="GO_Central"/>
</dbReference>
<dbReference type="GO" id="GO:0043186">
    <property type="term" value="C:P granule"/>
    <property type="evidence" value="ECO:0000314"/>
    <property type="project" value="WormBase"/>
</dbReference>
<dbReference type="GO" id="GO:0016442">
    <property type="term" value="C:RISC complex"/>
    <property type="evidence" value="ECO:0000318"/>
    <property type="project" value="GO_Central"/>
</dbReference>
<dbReference type="GO" id="GO:0017151">
    <property type="term" value="F:DEAD/H-box RNA helicase binding"/>
    <property type="evidence" value="ECO:0000353"/>
    <property type="project" value="WormBase"/>
</dbReference>
<dbReference type="GO" id="GO:0035198">
    <property type="term" value="F:miRNA binding"/>
    <property type="evidence" value="ECO:0000318"/>
    <property type="project" value="GO_Central"/>
</dbReference>
<dbReference type="GO" id="GO:0004521">
    <property type="term" value="F:RNA endonuclease activity"/>
    <property type="evidence" value="ECO:0000318"/>
    <property type="project" value="GO_Central"/>
</dbReference>
<dbReference type="GO" id="GO:0003727">
    <property type="term" value="F:single-stranded RNA binding"/>
    <property type="evidence" value="ECO:0000318"/>
    <property type="project" value="GO_Central"/>
</dbReference>
<dbReference type="GO" id="GO:0035194">
    <property type="term" value="P:regulatory ncRNA-mediated post-transcriptional gene silencing"/>
    <property type="evidence" value="ECO:0000318"/>
    <property type="project" value="GO_Central"/>
</dbReference>
<dbReference type="CDD" id="cd02846">
    <property type="entry name" value="PAZ_argonaute_like"/>
    <property type="match status" value="1"/>
</dbReference>
<dbReference type="FunFam" id="3.30.420.10:FF:000298">
    <property type="entry name" value="Argonaute protein wago-1"/>
    <property type="match status" value="1"/>
</dbReference>
<dbReference type="FunFam" id="3.40.50.2300:FF:000754">
    <property type="entry name" value="Chromosome-Segregation and RNAi deficient"/>
    <property type="match status" value="1"/>
</dbReference>
<dbReference type="FunFam" id="2.170.260.10:FF:000008">
    <property type="entry name" value="Protein argonaute 7"/>
    <property type="match status" value="1"/>
</dbReference>
<dbReference type="Gene3D" id="3.40.50.2300">
    <property type="match status" value="1"/>
</dbReference>
<dbReference type="Gene3D" id="2.170.260.10">
    <property type="entry name" value="paz domain"/>
    <property type="match status" value="1"/>
</dbReference>
<dbReference type="Gene3D" id="3.30.420.10">
    <property type="entry name" value="Ribonuclease H-like superfamily/Ribonuclease H"/>
    <property type="match status" value="1"/>
</dbReference>
<dbReference type="InterPro" id="IPR003100">
    <property type="entry name" value="PAZ_dom"/>
</dbReference>
<dbReference type="InterPro" id="IPR036085">
    <property type="entry name" value="PAZ_dom_sf"/>
</dbReference>
<dbReference type="InterPro" id="IPR003165">
    <property type="entry name" value="Piwi"/>
</dbReference>
<dbReference type="InterPro" id="IPR012337">
    <property type="entry name" value="RNaseH-like_sf"/>
</dbReference>
<dbReference type="InterPro" id="IPR036397">
    <property type="entry name" value="RNaseH_sf"/>
</dbReference>
<dbReference type="PANTHER" id="PTHR22891">
    <property type="entry name" value="EUKARYOTIC TRANSLATION INITIATION FACTOR 2C"/>
    <property type="match status" value="1"/>
</dbReference>
<dbReference type="Pfam" id="PF02170">
    <property type="entry name" value="PAZ"/>
    <property type="match status" value="1"/>
</dbReference>
<dbReference type="Pfam" id="PF02171">
    <property type="entry name" value="Piwi"/>
    <property type="match status" value="1"/>
</dbReference>
<dbReference type="SMART" id="SM00949">
    <property type="entry name" value="PAZ"/>
    <property type="match status" value="1"/>
</dbReference>
<dbReference type="SMART" id="SM00950">
    <property type="entry name" value="Piwi"/>
    <property type="match status" value="1"/>
</dbReference>
<dbReference type="SUPFAM" id="SSF101690">
    <property type="entry name" value="PAZ domain"/>
    <property type="match status" value="1"/>
</dbReference>
<dbReference type="SUPFAM" id="SSF53098">
    <property type="entry name" value="Ribonuclease H-like"/>
    <property type="match status" value="1"/>
</dbReference>
<dbReference type="PROSITE" id="PS50821">
    <property type="entry name" value="PAZ"/>
    <property type="match status" value="1"/>
</dbReference>
<dbReference type="PROSITE" id="PS50822">
    <property type="entry name" value="PIWI"/>
    <property type="match status" value="1"/>
</dbReference>
<organism evidence="10">
    <name type="scientific">Caenorhabditis elegans</name>
    <dbReference type="NCBI Taxonomy" id="6239"/>
    <lineage>
        <taxon>Eukaryota</taxon>
        <taxon>Metazoa</taxon>
        <taxon>Ecdysozoa</taxon>
        <taxon>Nematoda</taxon>
        <taxon>Chromadorea</taxon>
        <taxon>Rhabditida</taxon>
        <taxon>Rhabditina</taxon>
        <taxon>Rhabditomorpha</taxon>
        <taxon>Rhabditoidea</taxon>
        <taxon>Rhabditidae</taxon>
        <taxon>Peloderinae</taxon>
        <taxon>Caenorhabditis</taxon>
    </lineage>
</organism>